<sequence>MITIKKGLDLPIAGTPEQVIHDGPSITEIAILGEEYVGMRPFMAVKVGDIVKKGQILFSDKRNSGVHFTSPASGTVKAINRGAQRVLQSVVIAIEGKESISFPKYTSTELKNVGRAEIVKNLIDSGAWTALRTRPFSKIPAVDAEPVSIFVTAMDTNPLAADAELIINTNKQAFTDGLALLEQLTAGKVYVCKGETNLPKSESVNVEEKLFSGVHPAGLAGTHIHFIDPVSAVKQVWSINYQDVIAFGMLFTTGELYTNKVISLAGPAVKKPRLLRTHYGASINQLTKNELIDDEVRVISGSVLCGVTATAAHAYLGRYHNQISVLAEGYEKELFGWGVPGSKKHSVSNAFISAFNRAKSFAFTTTTGGSKRAMVPIGQYERIMPLDILPTNLLRDLIVGDTEEAQALGCLELDEEDLALCTYVCPGKYDYGSVLRASLSKIEKEG</sequence>
<reference key="1">
    <citation type="journal article" date="2008" name="BMC Genomics">
        <title>Genomics of an extreme psychrophile, Psychromonas ingrahamii.</title>
        <authorList>
            <person name="Riley M."/>
            <person name="Staley J.T."/>
            <person name="Danchin A."/>
            <person name="Wang T.Z."/>
            <person name="Brettin T.S."/>
            <person name="Hauser L.J."/>
            <person name="Land M.L."/>
            <person name="Thompson L.S."/>
        </authorList>
    </citation>
    <scope>NUCLEOTIDE SEQUENCE [LARGE SCALE GENOMIC DNA]</scope>
    <source>
        <strain>DSM 17664 / CCUG 51855 / 37</strain>
    </source>
</reference>
<evidence type="ECO:0000255" key="1">
    <source>
        <dbReference type="HAMAP-Rule" id="MF_00425"/>
    </source>
</evidence>
<gene>
    <name evidence="1" type="primary">nqrA</name>
    <name type="ordered locus">Ping_0746</name>
</gene>
<protein>
    <recommendedName>
        <fullName evidence="1">Na(+)-translocating NADH-quinone reductase subunit A</fullName>
        <shortName evidence="1">Na(+)-NQR subunit A</shortName>
        <shortName evidence="1">Na(+)-translocating NQR subunit A</shortName>
        <ecNumber evidence="1">7.2.1.1</ecNumber>
    </recommendedName>
    <alternativeName>
        <fullName evidence="1">NQR complex subunit A</fullName>
    </alternativeName>
    <alternativeName>
        <fullName evidence="1">NQR-1 subunit A</fullName>
    </alternativeName>
</protein>
<comment type="function">
    <text evidence="1">NQR complex catalyzes the reduction of ubiquinone-1 to ubiquinol by two successive reactions, coupled with the transport of Na(+) ions from the cytoplasm to the periplasm. NqrA to NqrE are probably involved in the second step, the conversion of ubisemiquinone to ubiquinol.</text>
</comment>
<comment type="catalytic activity">
    <reaction evidence="1">
        <text>a ubiquinone + n Na(+)(in) + NADH + H(+) = a ubiquinol + n Na(+)(out) + NAD(+)</text>
        <dbReference type="Rhea" id="RHEA:47748"/>
        <dbReference type="Rhea" id="RHEA-COMP:9565"/>
        <dbReference type="Rhea" id="RHEA-COMP:9566"/>
        <dbReference type="ChEBI" id="CHEBI:15378"/>
        <dbReference type="ChEBI" id="CHEBI:16389"/>
        <dbReference type="ChEBI" id="CHEBI:17976"/>
        <dbReference type="ChEBI" id="CHEBI:29101"/>
        <dbReference type="ChEBI" id="CHEBI:57540"/>
        <dbReference type="ChEBI" id="CHEBI:57945"/>
        <dbReference type="EC" id="7.2.1.1"/>
    </reaction>
</comment>
<comment type="subunit">
    <text evidence="1">Composed of six subunits; NqrA, NqrB, NqrC, NqrD, NqrE and NqrF.</text>
</comment>
<comment type="similarity">
    <text evidence="1">Belongs to the NqrA family.</text>
</comment>
<feature type="chain" id="PRO_1000060125" description="Na(+)-translocating NADH-quinone reductase subunit A">
    <location>
        <begin position="1"/>
        <end position="446"/>
    </location>
</feature>
<dbReference type="EC" id="7.2.1.1" evidence="1"/>
<dbReference type="EMBL" id="CP000510">
    <property type="protein sequence ID" value="ABM02598.1"/>
    <property type="molecule type" value="Genomic_DNA"/>
</dbReference>
<dbReference type="RefSeq" id="WP_011769157.1">
    <property type="nucleotide sequence ID" value="NC_008709.1"/>
</dbReference>
<dbReference type="SMR" id="A1SSY3"/>
<dbReference type="STRING" id="357804.Ping_0746"/>
<dbReference type="KEGG" id="pin:Ping_0746"/>
<dbReference type="eggNOG" id="COG1726">
    <property type="taxonomic scope" value="Bacteria"/>
</dbReference>
<dbReference type="HOGENOM" id="CLU_046656_0_0_6"/>
<dbReference type="OrthoDB" id="9774536at2"/>
<dbReference type="Proteomes" id="UP000000639">
    <property type="component" value="Chromosome"/>
</dbReference>
<dbReference type="GO" id="GO:0016655">
    <property type="term" value="F:oxidoreductase activity, acting on NAD(P)H, quinone or similar compound as acceptor"/>
    <property type="evidence" value="ECO:0007669"/>
    <property type="project" value="UniProtKB-UniRule"/>
</dbReference>
<dbReference type="GO" id="GO:0006814">
    <property type="term" value="P:sodium ion transport"/>
    <property type="evidence" value="ECO:0007669"/>
    <property type="project" value="UniProtKB-UniRule"/>
</dbReference>
<dbReference type="HAMAP" id="MF_00425">
    <property type="entry name" value="NqrA"/>
    <property type="match status" value="1"/>
</dbReference>
<dbReference type="InterPro" id="IPR008703">
    <property type="entry name" value="NqrA"/>
</dbReference>
<dbReference type="InterPro" id="IPR056148">
    <property type="entry name" value="NQRA_2nd"/>
</dbReference>
<dbReference type="InterPro" id="IPR022615">
    <property type="entry name" value="NqrA_C_domain"/>
</dbReference>
<dbReference type="InterPro" id="IPR056147">
    <property type="entry name" value="NQRA_N"/>
</dbReference>
<dbReference type="NCBIfam" id="TIGR01936">
    <property type="entry name" value="nqrA"/>
    <property type="match status" value="1"/>
</dbReference>
<dbReference type="NCBIfam" id="NF003759">
    <property type="entry name" value="PRK05352.1-2"/>
    <property type="match status" value="1"/>
</dbReference>
<dbReference type="PANTHER" id="PTHR37839">
    <property type="entry name" value="NA(+)-TRANSLOCATING NADH-QUINONE REDUCTASE SUBUNIT A"/>
    <property type="match status" value="1"/>
</dbReference>
<dbReference type="PANTHER" id="PTHR37839:SF1">
    <property type="entry name" value="NA(+)-TRANSLOCATING NADH-QUINONE REDUCTASE SUBUNIT A"/>
    <property type="match status" value="1"/>
</dbReference>
<dbReference type="Pfam" id="PF24836">
    <property type="entry name" value="NQRA_2nd"/>
    <property type="match status" value="1"/>
</dbReference>
<dbReference type="Pfam" id="PF05896">
    <property type="entry name" value="NQRA_N"/>
    <property type="match status" value="1"/>
</dbReference>
<dbReference type="Pfam" id="PF11973">
    <property type="entry name" value="NQRA_SLBB"/>
    <property type="match status" value="1"/>
</dbReference>
<keyword id="KW-0406">Ion transport</keyword>
<keyword id="KW-0520">NAD</keyword>
<keyword id="KW-1185">Reference proteome</keyword>
<keyword id="KW-0915">Sodium</keyword>
<keyword id="KW-0739">Sodium transport</keyword>
<keyword id="KW-1278">Translocase</keyword>
<keyword id="KW-0813">Transport</keyword>
<keyword id="KW-0830">Ubiquinone</keyword>
<organism>
    <name type="scientific">Psychromonas ingrahamii (strain DSM 17664 / CCUG 51855 / 37)</name>
    <dbReference type="NCBI Taxonomy" id="357804"/>
    <lineage>
        <taxon>Bacteria</taxon>
        <taxon>Pseudomonadati</taxon>
        <taxon>Pseudomonadota</taxon>
        <taxon>Gammaproteobacteria</taxon>
        <taxon>Alteromonadales</taxon>
        <taxon>Psychromonadaceae</taxon>
        <taxon>Psychromonas</taxon>
    </lineage>
</organism>
<proteinExistence type="inferred from homology"/>
<accession>A1SSY3</accession>
<name>NQRA_PSYIN</name>